<feature type="chain" id="PRO_0000155899" description="Ribonuclease Z">
    <location>
        <begin position="1"/>
        <end position="306"/>
    </location>
</feature>
<feature type="active site" description="Proton acceptor" evidence="1">
    <location>
        <position position="67"/>
    </location>
</feature>
<feature type="binding site" evidence="1">
    <location>
        <position position="63"/>
    </location>
    <ligand>
        <name>Zn(2+)</name>
        <dbReference type="ChEBI" id="CHEBI:29105"/>
        <label>1</label>
        <note>catalytic</note>
    </ligand>
</feature>
<feature type="binding site" evidence="1">
    <location>
        <position position="65"/>
    </location>
    <ligand>
        <name>Zn(2+)</name>
        <dbReference type="ChEBI" id="CHEBI:29105"/>
        <label>1</label>
        <note>catalytic</note>
    </ligand>
</feature>
<feature type="binding site" evidence="1">
    <location>
        <position position="67"/>
    </location>
    <ligand>
        <name>Zn(2+)</name>
        <dbReference type="ChEBI" id="CHEBI:29105"/>
        <label>2</label>
        <note>catalytic</note>
    </ligand>
</feature>
<feature type="binding site" evidence="1">
    <location>
        <position position="68"/>
    </location>
    <ligand>
        <name>Zn(2+)</name>
        <dbReference type="ChEBI" id="CHEBI:29105"/>
        <label>2</label>
        <note>catalytic</note>
    </ligand>
</feature>
<feature type="binding site" evidence="1">
    <location>
        <position position="141"/>
    </location>
    <ligand>
        <name>Zn(2+)</name>
        <dbReference type="ChEBI" id="CHEBI:29105"/>
        <label>1</label>
        <note>catalytic</note>
    </ligand>
</feature>
<feature type="binding site" evidence="1">
    <location>
        <position position="211"/>
    </location>
    <ligand>
        <name>Zn(2+)</name>
        <dbReference type="ChEBI" id="CHEBI:29105"/>
        <label>1</label>
        <note>catalytic</note>
    </ligand>
</feature>
<feature type="binding site" evidence="1">
    <location>
        <position position="211"/>
    </location>
    <ligand>
        <name>Zn(2+)</name>
        <dbReference type="ChEBI" id="CHEBI:29105"/>
        <label>2</label>
        <note>catalytic</note>
    </ligand>
</feature>
<feature type="binding site" evidence="1">
    <location>
        <position position="269"/>
    </location>
    <ligand>
        <name>Zn(2+)</name>
        <dbReference type="ChEBI" id="CHEBI:29105"/>
        <label>2</label>
        <note>catalytic</note>
    </ligand>
</feature>
<proteinExistence type="inferred from homology"/>
<evidence type="ECO:0000255" key="1">
    <source>
        <dbReference type="HAMAP-Rule" id="MF_01818"/>
    </source>
</evidence>
<organism>
    <name type="scientific">Staphylococcus epidermidis (strain ATCC 12228 / FDA PCI 1200)</name>
    <dbReference type="NCBI Taxonomy" id="176280"/>
    <lineage>
        <taxon>Bacteria</taxon>
        <taxon>Bacillati</taxon>
        <taxon>Bacillota</taxon>
        <taxon>Bacilli</taxon>
        <taxon>Bacillales</taxon>
        <taxon>Staphylococcaceae</taxon>
        <taxon>Staphylococcus</taxon>
    </lineage>
</organism>
<comment type="function">
    <text evidence="1">Zinc phosphodiesterase, which displays some tRNA 3'-processing endonuclease activity. Probably involved in tRNA maturation, by removing a 3'-trailer from precursor tRNA.</text>
</comment>
<comment type="catalytic activity">
    <reaction evidence="1">
        <text>Endonucleolytic cleavage of RNA, removing extra 3' nucleotides from tRNA precursor, generating 3' termini of tRNAs. A 3'-hydroxy group is left at the tRNA terminus and a 5'-phosphoryl group is left at the trailer molecule.</text>
        <dbReference type="EC" id="3.1.26.11"/>
    </reaction>
</comment>
<comment type="cofactor">
    <cofactor evidence="1">
        <name>Zn(2+)</name>
        <dbReference type="ChEBI" id="CHEBI:29105"/>
    </cofactor>
    <text evidence="1">Binds 2 Zn(2+) ions.</text>
</comment>
<comment type="subunit">
    <text evidence="1">Homodimer.</text>
</comment>
<comment type="similarity">
    <text evidence="1">Belongs to the RNase Z family.</text>
</comment>
<protein>
    <recommendedName>
        <fullName evidence="1">Ribonuclease Z</fullName>
        <shortName evidence="1">RNase Z</shortName>
        <ecNumber evidence="1">3.1.26.11</ecNumber>
    </recommendedName>
    <alternativeName>
        <fullName evidence="1">tRNA 3 endonuclease</fullName>
    </alternativeName>
    <alternativeName>
        <fullName evidence="1">tRNase Z</fullName>
    </alternativeName>
</protein>
<gene>
    <name evidence="1" type="primary">rnz</name>
    <name type="ordered locus">SE_1187</name>
</gene>
<reference key="1">
    <citation type="journal article" date="2003" name="Mol. Microbiol.">
        <title>Genome-based analysis of virulence genes in a non-biofilm-forming Staphylococcus epidermidis strain (ATCC 12228).</title>
        <authorList>
            <person name="Zhang Y.-Q."/>
            <person name="Ren S.-X."/>
            <person name="Li H.-L."/>
            <person name="Wang Y.-X."/>
            <person name="Fu G."/>
            <person name="Yang J."/>
            <person name="Qin Z.-Q."/>
            <person name="Miao Y.-G."/>
            <person name="Wang W.-Y."/>
            <person name="Chen R.-S."/>
            <person name="Shen Y."/>
            <person name="Chen Z."/>
            <person name="Yuan Z.-H."/>
            <person name="Zhao G.-P."/>
            <person name="Qu D."/>
            <person name="Danchin A."/>
            <person name="Wen Y.-M."/>
        </authorList>
    </citation>
    <scope>NUCLEOTIDE SEQUENCE [LARGE SCALE GENOMIC DNA]</scope>
    <source>
        <strain>ATCC 12228 / FDA PCI 1200</strain>
    </source>
</reference>
<keyword id="KW-0255">Endonuclease</keyword>
<keyword id="KW-0378">Hydrolase</keyword>
<keyword id="KW-0479">Metal-binding</keyword>
<keyword id="KW-0540">Nuclease</keyword>
<keyword id="KW-0819">tRNA processing</keyword>
<keyword id="KW-0862">Zinc</keyword>
<accession>Q8CSG7</accession>
<dbReference type="EC" id="3.1.26.11" evidence="1"/>
<dbReference type="EMBL" id="AE015929">
    <property type="protein sequence ID" value="AAO04786.1"/>
    <property type="molecule type" value="Genomic_DNA"/>
</dbReference>
<dbReference type="RefSeq" id="NP_764742.1">
    <property type="nucleotide sequence ID" value="NC_004461.1"/>
</dbReference>
<dbReference type="RefSeq" id="WP_002439993.1">
    <property type="nucleotide sequence ID" value="NZ_WBME01000006.1"/>
</dbReference>
<dbReference type="SMR" id="Q8CSG7"/>
<dbReference type="KEGG" id="sep:SE_1187"/>
<dbReference type="PATRIC" id="fig|176280.10.peg.1158"/>
<dbReference type="eggNOG" id="COG1234">
    <property type="taxonomic scope" value="Bacteria"/>
</dbReference>
<dbReference type="HOGENOM" id="CLU_031317_2_0_9"/>
<dbReference type="OrthoDB" id="9800940at2"/>
<dbReference type="Proteomes" id="UP000001411">
    <property type="component" value="Chromosome"/>
</dbReference>
<dbReference type="GO" id="GO:0042781">
    <property type="term" value="F:3'-tRNA processing endoribonuclease activity"/>
    <property type="evidence" value="ECO:0007669"/>
    <property type="project" value="UniProtKB-UniRule"/>
</dbReference>
<dbReference type="GO" id="GO:0008270">
    <property type="term" value="F:zinc ion binding"/>
    <property type="evidence" value="ECO:0007669"/>
    <property type="project" value="UniProtKB-UniRule"/>
</dbReference>
<dbReference type="CDD" id="cd07717">
    <property type="entry name" value="RNaseZ_ZiPD-like_MBL-fold"/>
    <property type="match status" value="1"/>
</dbReference>
<dbReference type="FunFam" id="3.60.15.10:FF:000002">
    <property type="entry name" value="Ribonuclease Z"/>
    <property type="match status" value="1"/>
</dbReference>
<dbReference type="Gene3D" id="3.60.15.10">
    <property type="entry name" value="Ribonuclease Z/Hydroxyacylglutathione hydrolase-like"/>
    <property type="match status" value="1"/>
</dbReference>
<dbReference type="HAMAP" id="MF_01818">
    <property type="entry name" value="RNase_Z_BN"/>
    <property type="match status" value="1"/>
</dbReference>
<dbReference type="InterPro" id="IPR001279">
    <property type="entry name" value="Metallo-B-lactamas"/>
</dbReference>
<dbReference type="InterPro" id="IPR036866">
    <property type="entry name" value="RibonucZ/Hydroxyglut_hydro"/>
</dbReference>
<dbReference type="InterPro" id="IPR013471">
    <property type="entry name" value="RNase_Z/BN"/>
</dbReference>
<dbReference type="NCBIfam" id="NF000801">
    <property type="entry name" value="PRK00055.1-3"/>
    <property type="match status" value="1"/>
</dbReference>
<dbReference type="NCBIfam" id="TIGR02651">
    <property type="entry name" value="RNase_Z"/>
    <property type="match status" value="1"/>
</dbReference>
<dbReference type="PANTHER" id="PTHR46018">
    <property type="entry name" value="ZINC PHOSPHODIESTERASE ELAC PROTEIN 1"/>
    <property type="match status" value="1"/>
</dbReference>
<dbReference type="PANTHER" id="PTHR46018:SF2">
    <property type="entry name" value="ZINC PHOSPHODIESTERASE ELAC PROTEIN 1"/>
    <property type="match status" value="1"/>
</dbReference>
<dbReference type="Pfam" id="PF12706">
    <property type="entry name" value="Lactamase_B_2"/>
    <property type="match status" value="1"/>
</dbReference>
<dbReference type="SUPFAM" id="SSF56281">
    <property type="entry name" value="Metallo-hydrolase/oxidoreductase"/>
    <property type="match status" value="1"/>
</dbReference>
<name>RNZ_STAES</name>
<sequence length="306" mass="34685">MEVTFFGTSAGLPTKERNTQSIALNLEPYSNSIWLFDVGEGTQHQILRHSIKLGKIDHIFITHMHGDHIFGLPGLLTSRSFQGGENKPLTIIGPKGIQNYIETSLQLSESHLNYPITYIEINQQLAYHHNGFTVQAEMLNHGIPSFGYRIEAPIMPGTINVEALRGIGLEPGPKYQEVKLQETFEYKGLIYNSDDFKGKAKPGPIISIFGDTKPCENEYELAKNSDLMIHEATYIEGDKKLANNYHHSHIDDVFNLIKQANVNKSLITHISNRYNIDEVTSIYNELSLDQTSPHFYFVKDFDTFKI</sequence>